<keyword id="KW-0408">Iron</keyword>
<keyword id="KW-0479">Metal-binding</keyword>
<gene>
    <name evidence="1" type="primary">cyaY</name>
    <name type="ordered locus">NTHI0886</name>
</gene>
<dbReference type="EMBL" id="CP000057">
    <property type="protein sequence ID" value="AAX87780.1"/>
    <property type="molecule type" value="Genomic_DNA"/>
</dbReference>
<dbReference type="RefSeq" id="WP_005655473.1">
    <property type="nucleotide sequence ID" value="NC_007146.2"/>
</dbReference>
<dbReference type="SMR" id="Q4QMG7"/>
<dbReference type="GeneID" id="93219767"/>
<dbReference type="KEGG" id="hit:NTHI0886"/>
<dbReference type="HOGENOM" id="CLU_080880_3_0_6"/>
<dbReference type="Proteomes" id="UP000002525">
    <property type="component" value="Chromosome"/>
</dbReference>
<dbReference type="GO" id="GO:0005829">
    <property type="term" value="C:cytosol"/>
    <property type="evidence" value="ECO:0007669"/>
    <property type="project" value="TreeGrafter"/>
</dbReference>
<dbReference type="GO" id="GO:0008199">
    <property type="term" value="F:ferric iron binding"/>
    <property type="evidence" value="ECO:0007669"/>
    <property type="project" value="InterPro"/>
</dbReference>
<dbReference type="GO" id="GO:0008198">
    <property type="term" value="F:ferrous iron binding"/>
    <property type="evidence" value="ECO:0007669"/>
    <property type="project" value="TreeGrafter"/>
</dbReference>
<dbReference type="GO" id="GO:0016226">
    <property type="term" value="P:iron-sulfur cluster assembly"/>
    <property type="evidence" value="ECO:0007669"/>
    <property type="project" value="UniProtKB-UniRule"/>
</dbReference>
<dbReference type="CDD" id="cd00503">
    <property type="entry name" value="Frataxin"/>
    <property type="match status" value="1"/>
</dbReference>
<dbReference type="FunFam" id="3.30.920.10:FF:000009">
    <property type="entry name" value="Iron-sulfur cluster assembly protein CyaY"/>
    <property type="match status" value="1"/>
</dbReference>
<dbReference type="Gene3D" id="3.30.920.10">
    <property type="entry name" value="Frataxin/CyaY"/>
    <property type="match status" value="1"/>
</dbReference>
<dbReference type="HAMAP" id="MF_00142">
    <property type="entry name" value="CyaY"/>
    <property type="match status" value="1"/>
</dbReference>
<dbReference type="InterPro" id="IPR047584">
    <property type="entry name" value="CyaY"/>
</dbReference>
<dbReference type="InterPro" id="IPR002908">
    <property type="entry name" value="Frataxin/CyaY"/>
</dbReference>
<dbReference type="InterPro" id="IPR036524">
    <property type="entry name" value="Frataxin/CyaY_sf"/>
</dbReference>
<dbReference type="InterPro" id="IPR020895">
    <property type="entry name" value="Frataxin_CS"/>
</dbReference>
<dbReference type="NCBIfam" id="TIGR03421">
    <property type="entry name" value="FeS_CyaY"/>
    <property type="match status" value="1"/>
</dbReference>
<dbReference type="PANTHER" id="PTHR16821">
    <property type="entry name" value="FRATAXIN"/>
    <property type="match status" value="1"/>
</dbReference>
<dbReference type="PANTHER" id="PTHR16821:SF2">
    <property type="entry name" value="FRATAXIN, MITOCHONDRIAL"/>
    <property type="match status" value="1"/>
</dbReference>
<dbReference type="Pfam" id="PF01491">
    <property type="entry name" value="Frataxin_Cyay"/>
    <property type="match status" value="1"/>
</dbReference>
<dbReference type="SMART" id="SM01219">
    <property type="entry name" value="Frataxin_Cyay"/>
    <property type="match status" value="1"/>
</dbReference>
<dbReference type="SUPFAM" id="SSF55387">
    <property type="entry name" value="Frataxin/Nqo15-like"/>
    <property type="match status" value="1"/>
</dbReference>
<dbReference type="PROSITE" id="PS01344">
    <property type="entry name" value="FRATAXIN_1"/>
    <property type="match status" value="1"/>
</dbReference>
<dbReference type="PROSITE" id="PS50810">
    <property type="entry name" value="FRATAXIN_2"/>
    <property type="match status" value="1"/>
</dbReference>
<comment type="function">
    <text evidence="1">Involved in iron-sulfur (Fe-S) cluster assembly. May act as a regulator of Fe-S biogenesis.</text>
</comment>
<comment type="similarity">
    <text evidence="1">Belongs to the frataxin family.</text>
</comment>
<evidence type="ECO:0000255" key="1">
    <source>
        <dbReference type="HAMAP-Rule" id="MF_00142"/>
    </source>
</evidence>
<accession>Q4QMG7</accession>
<feature type="chain" id="PRO_0000193942" description="Iron-sulfur cluster assembly protein CyaY">
    <location>
        <begin position="1"/>
        <end position="101"/>
    </location>
</feature>
<name>CYAY_HAEI8</name>
<protein>
    <recommendedName>
        <fullName evidence="1">Iron-sulfur cluster assembly protein CyaY</fullName>
    </recommendedName>
</protein>
<reference key="1">
    <citation type="journal article" date="2005" name="J. Bacteriol.">
        <title>Genomic sequence of an otitis media isolate of nontypeable Haemophilus influenzae: comparative study with H. influenzae serotype d, strain KW20.</title>
        <authorList>
            <person name="Harrison A."/>
            <person name="Dyer D.W."/>
            <person name="Gillaspy A."/>
            <person name="Ray W.C."/>
            <person name="Mungur R."/>
            <person name="Carson M.B."/>
            <person name="Zhong H."/>
            <person name="Gipson J."/>
            <person name="Gipson M."/>
            <person name="Johnson L.S."/>
            <person name="Lewis L."/>
            <person name="Bakaletz L.O."/>
            <person name="Munson R.S. Jr."/>
        </authorList>
    </citation>
    <scope>NUCLEOTIDE SEQUENCE [LARGE SCALE GENOMIC DNA]</scope>
    <source>
        <strain>86-028NP</strain>
    </source>
</reference>
<organism>
    <name type="scientific">Haemophilus influenzae (strain 86-028NP)</name>
    <dbReference type="NCBI Taxonomy" id="281310"/>
    <lineage>
        <taxon>Bacteria</taxon>
        <taxon>Pseudomonadati</taxon>
        <taxon>Pseudomonadota</taxon>
        <taxon>Gammaproteobacteria</taxon>
        <taxon>Pasteurellales</taxon>
        <taxon>Pasteurellaceae</taxon>
        <taxon>Haemophilus</taxon>
    </lineage>
</organism>
<sequence>MNIAEFHQNIEQVWQKIEEELENQGADVDCETQGSVFTITFDNRTQIVINKQEPLLELWIASKLGGFHFAFKNGDWVSNDGQRFWDCFVEACAAHGENVQF</sequence>
<proteinExistence type="inferred from homology"/>